<accession>Q2N8R7</accession>
<gene>
    <name evidence="1" type="primary">tsaD</name>
    <name type="synonym">gcp</name>
    <name type="ordered locus">ELI_09160</name>
</gene>
<reference key="1">
    <citation type="journal article" date="2009" name="J. Bacteriol.">
        <title>Complete genome sequence of Erythrobacter litoralis HTCC2594.</title>
        <authorList>
            <person name="Oh H.M."/>
            <person name="Giovannoni S.J."/>
            <person name="Ferriera S."/>
            <person name="Johnson J."/>
            <person name="Cho J.C."/>
        </authorList>
    </citation>
    <scope>NUCLEOTIDE SEQUENCE [LARGE SCALE GENOMIC DNA]</scope>
    <source>
        <strain>HTCC2594</strain>
    </source>
</reference>
<organism>
    <name type="scientific">Erythrobacter litoralis (strain HTCC2594)</name>
    <dbReference type="NCBI Taxonomy" id="314225"/>
    <lineage>
        <taxon>Bacteria</taxon>
        <taxon>Pseudomonadati</taxon>
        <taxon>Pseudomonadota</taxon>
        <taxon>Alphaproteobacteria</taxon>
        <taxon>Sphingomonadales</taxon>
        <taxon>Erythrobacteraceae</taxon>
        <taxon>Erythrobacter/Porphyrobacter group</taxon>
        <taxon>Erythrobacter</taxon>
    </lineage>
</organism>
<evidence type="ECO:0000255" key="1">
    <source>
        <dbReference type="HAMAP-Rule" id="MF_01445"/>
    </source>
</evidence>
<evidence type="ECO:0000256" key="2">
    <source>
        <dbReference type="SAM" id="MobiDB-lite"/>
    </source>
</evidence>
<sequence length="344" mass="35785">MRIVLGIESSCDETAAALVATDRTILAQHIASQDEAHAPYGGVVPEIAARAHAERLAPMIEAVMQEAGVDYADLDAIAATAGPGLIGGVMVGLVSAKAIAMAAGKPLIAINHLEGHALSSRLADSELEFPYALLLVSGGHCQILLVEGVGQYRRLATTIDDALGEAFDKTAKILGLGYPGGPAVEKLARDGDAQAVPLPRPMLGSAEPHFSFAGLKSAVLRAKESGDHEDADIAASFQQAAVDCILDRLQVALGGDDWPPALVVAGGVAANQTIRAALEGFAADRSMRFVAPPLALCTDNAAMIGWAGCERLDLEQDDPLDFRARPRWPLDPEAEPVRGAGVKA</sequence>
<keyword id="KW-0012">Acyltransferase</keyword>
<keyword id="KW-0963">Cytoplasm</keyword>
<keyword id="KW-0408">Iron</keyword>
<keyword id="KW-0479">Metal-binding</keyword>
<keyword id="KW-1185">Reference proteome</keyword>
<keyword id="KW-0808">Transferase</keyword>
<keyword id="KW-0819">tRNA processing</keyword>
<proteinExistence type="inferred from homology"/>
<dbReference type="EC" id="2.3.1.234" evidence="1"/>
<dbReference type="EMBL" id="CP000157">
    <property type="protein sequence ID" value="ABC63924.1"/>
    <property type="molecule type" value="Genomic_DNA"/>
</dbReference>
<dbReference type="RefSeq" id="WP_011414752.1">
    <property type="nucleotide sequence ID" value="NC_007722.1"/>
</dbReference>
<dbReference type="SMR" id="Q2N8R7"/>
<dbReference type="STRING" id="314225.ELI_09160"/>
<dbReference type="KEGG" id="eli:ELI_09160"/>
<dbReference type="eggNOG" id="COG0533">
    <property type="taxonomic scope" value="Bacteria"/>
</dbReference>
<dbReference type="HOGENOM" id="CLU_023208_0_2_5"/>
<dbReference type="OrthoDB" id="9806197at2"/>
<dbReference type="Proteomes" id="UP000008808">
    <property type="component" value="Chromosome"/>
</dbReference>
<dbReference type="GO" id="GO:0005737">
    <property type="term" value="C:cytoplasm"/>
    <property type="evidence" value="ECO:0007669"/>
    <property type="project" value="UniProtKB-SubCell"/>
</dbReference>
<dbReference type="GO" id="GO:0005506">
    <property type="term" value="F:iron ion binding"/>
    <property type="evidence" value="ECO:0007669"/>
    <property type="project" value="UniProtKB-UniRule"/>
</dbReference>
<dbReference type="GO" id="GO:0061711">
    <property type="term" value="F:N(6)-L-threonylcarbamoyladenine synthase activity"/>
    <property type="evidence" value="ECO:0007669"/>
    <property type="project" value="UniProtKB-EC"/>
</dbReference>
<dbReference type="GO" id="GO:0002949">
    <property type="term" value="P:tRNA threonylcarbamoyladenosine modification"/>
    <property type="evidence" value="ECO:0007669"/>
    <property type="project" value="UniProtKB-UniRule"/>
</dbReference>
<dbReference type="CDD" id="cd24133">
    <property type="entry name" value="ASKHA_NBD_TsaD_bac"/>
    <property type="match status" value="1"/>
</dbReference>
<dbReference type="FunFam" id="3.30.420.40:FF:000012">
    <property type="entry name" value="tRNA N6-adenosine threonylcarbamoyltransferase"/>
    <property type="match status" value="1"/>
</dbReference>
<dbReference type="Gene3D" id="3.30.420.40">
    <property type="match status" value="2"/>
</dbReference>
<dbReference type="HAMAP" id="MF_01445">
    <property type="entry name" value="TsaD"/>
    <property type="match status" value="1"/>
</dbReference>
<dbReference type="InterPro" id="IPR043129">
    <property type="entry name" value="ATPase_NBD"/>
</dbReference>
<dbReference type="InterPro" id="IPR000905">
    <property type="entry name" value="Gcp-like_dom"/>
</dbReference>
<dbReference type="InterPro" id="IPR017861">
    <property type="entry name" value="KAE1/TsaD"/>
</dbReference>
<dbReference type="InterPro" id="IPR022450">
    <property type="entry name" value="TsaD"/>
</dbReference>
<dbReference type="NCBIfam" id="TIGR00329">
    <property type="entry name" value="gcp_kae1"/>
    <property type="match status" value="1"/>
</dbReference>
<dbReference type="NCBIfam" id="TIGR03723">
    <property type="entry name" value="T6A_TsaD_YgjD"/>
    <property type="match status" value="1"/>
</dbReference>
<dbReference type="PANTHER" id="PTHR11735">
    <property type="entry name" value="TRNA N6-ADENOSINE THREONYLCARBAMOYLTRANSFERASE"/>
    <property type="match status" value="1"/>
</dbReference>
<dbReference type="PANTHER" id="PTHR11735:SF6">
    <property type="entry name" value="TRNA N6-ADENOSINE THREONYLCARBAMOYLTRANSFERASE, MITOCHONDRIAL"/>
    <property type="match status" value="1"/>
</dbReference>
<dbReference type="Pfam" id="PF00814">
    <property type="entry name" value="TsaD"/>
    <property type="match status" value="1"/>
</dbReference>
<dbReference type="PRINTS" id="PR00789">
    <property type="entry name" value="OSIALOPTASE"/>
</dbReference>
<dbReference type="SUPFAM" id="SSF53067">
    <property type="entry name" value="Actin-like ATPase domain"/>
    <property type="match status" value="2"/>
</dbReference>
<comment type="function">
    <text evidence="1">Required for the formation of a threonylcarbamoyl group on adenosine at position 37 (t(6)A37) in tRNAs that read codons beginning with adenine. Is involved in the transfer of the threonylcarbamoyl moiety of threonylcarbamoyl-AMP (TC-AMP) to the N6 group of A37, together with TsaE and TsaB. TsaD likely plays a direct catalytic role in this reaction.</text>
</comment>
<comment type="catalytic activity">
    <reaction evidence="1">
        <text>L-threonylcarbamoyladenylate + adenosine(37) in tRNA = N(6)-L-threonylcarbamoyladenosine(37) in tRNA + AMP + H(+)</text>
        <dbReference type="Rhea" id="RHEA:37059"/>
        <dbReference type="Rhea" id="RHEA-COMP:10162"/>
        <dbReference type="Rhea" id="RHEA-COMP:10163"/>
        <dbReference type="ChEBI" id="CHEBI:15378"/>
        <dbReference type="ChEBI" id="CHEBI:73682"/>
        <dbReference type="ChEBI" id="CHEBI:74411"/>
        <dbReference type="ChEBI" id="CHEBI:74418"/>
        <dbReference type="ChEBI" id="CHEBI:456215"/>
        <dbReference type="EC" id="2.3.1.234"/>
    </reaction>
</comment>
<comment type="cofactor">
    <cofactor evidence="1">
        <name>Fe(2+)</name>
        <dbReference type="ChEBI" id="CHEBI:29033"/>
    </cofactor>
    <text evidence="1">Binds 1 Fe(2+) ion per subunit.</text>
</comment>
<comment type="subcellular location">
    <subcellularLocation>
        <location evidence="1">Cytoplasm</location>
    </subcellularLocation>
</comment>
<comment type="similarity">
    <text evidence="1">Belongs to the KAE1 / TsaD family.</text>
</comment>
<feature type="chain" id="PRO_0000303358" description="tRNA N6-adenosine threonylcarbamoyltransferase">
    <location>
        <begin position="1"/>
        <end position="344"/>
    </location>
</feature>
<feature type="region of interest" description="Disordered" evidence="2">
    <location>
        <begin position="323"/>
        <end position="344"/>
    </location>
</feature>
<feature type="binding site" evidence="1">
    <location>
        <position position="112"/>
    </location>
    <ligand>
        <name>Fe cation</name>
        <dbReference type="ChEBI" id="CHEBI:24875"/>
    </ligand>
</feature>
<feature type="binding site" evidence="1">
    <location>
        <position position="116"/>
    </location>
    <ligand>
        <name>Fe cation</name>
        <dbReference type="ChEBI" id="CHEBI:24875"/>
    </ligand>
</feature>
<feature type="binding site" evidence="1">
    <location>
        <begin position="135"/>
        <end position="139"/>
    </location>
    <ligand>
        <name>substrate</name>
    </ligand>
</feature>
<feature type="binding site" evidence="1">
    <location>
        <position position="168"/>
    </location>
    <ligand>
        <name>substrate</name>
    </ligand>
</feature>
<feature type="binding site" evidence="1">
    <location>
        <position position="181"/>
    </location>
    <ligand>
        <name>substrate</name>
    </ligand>
</feature>
<feature type="binding site" evidence="1">
    <location>
        <position position="271"/>
    </location>
    <ligand>
        <name>substrate</name>
    </ligand>
</feature>
<feature type="binding site" evidence="1">
    <location>
        <position position="299"/>
    </location>
    <ligand>
        <name>Fe cation</name>
        <dbReference type="ChEBI" id="CHEBI:24875"/>
    </ligand>
</feature>
<protein>
    <recommendedName>
        <fullName evidence="1">tRNA N6-adenosine threonylcarbamoyltransferase</fullName>
        <ecNumber evidence="1">2.3.1.234</ecNumber>
    </recommendedName>
    <alternativeName>
        <fullName evidence="1">N6-L-threonylcarbamoyladenine synthase</fullName>
        <shortName evidence="1">t(6)A synthase</shortName>
    </alternativeName>
    <alternativeName>
        <fullName evidence="1">t(6)A37 threonylcarbamoyladenosine biosynthesis protein TsaD</fullName>
    </alternativeName>
    <alternativeName>
        <fullName evidence="1">tRNA threonylcarbamoyladenosine biosynthesis protein TsaD</fullName>
    </alternativeName>
</protein>
<name>TSAD_ERYLH</name>